<dbReference type="EMBL" id="Y08257">
    <property type="protein sequence ID" value="CAA69536.1"/>
    <property type="molecule type" value="Genomic_DNA"/>
</dbReference>
<dbReference type="EMBL" id="AE006641">
    <property type="protein sequence ID" value="AAK40427.1"/>
    <property type="molecule type" value="Genomic_DNA"/>
</dbReference>
<dbReference type="PIR" id="S75422">
    <property type="entry name" value="S75422"/>
</dbReference>
<dbReference type="SMR" id="P95994"/>
<dbReference type="FunCoup" id="P95994">
    <property type="interactions" value="81"/>
</dbReference>
<dbReference type="STRING" id="273057.SSO0066"/>
<dbReference type="PaxDb" id="273057-SSO0066"/>
<dbReference type="EnsemblBacteria" id="AAK40427">
    <property type="protein sequence ID" value="AAK40427"/>
    <property type="gene ID" value="SSO0066"/>
</dbReference>
<dbReference type="KEGG" id="sso:SSO0066"/>
<dbReference type="PATRIC" id="fig|273057.12.peg.66"/>
<dbReference type="eggNOG" id="arCOG01728">
    <property type="taxonomic scope" value="Archaea"/>
</dbReference>
<dbReference type="HOGENOM" id="CLU_038085_2_0_2"/>
<dbReference type="InParanoid" id="P95994"/>
<dbReference type="PhylomeDB" id="P95994"/>
<dbReference type="Proteomes" id="UP000001974">
    <property type="component" value="Chromosome"/>
</dbReference>
<dbReference type="CDD" id="cd07361">
    <property type="entry name" value="MEMO_like"/>
    <property type="match status" value="1"/>
</dbReference>
<dbReference type="Gene3D" id="3.40.830.10">
    <property type="entry name" value="LigB-like"/>
    <property type="match status" value="1"/>
</dbReference>
<dbReference type="HAMAP" id="MF_00055">
    <property type="entry name" value="MEMO1"/>
    <property type="match status" value="1"/>
</dbReference>
<dbReference type="InterPro" id="IPR002737">
    <property type="entry name" value="MEMO1_fam"/>
</dbReference>
<dbReference type="NCBIfam" id="TIGR04336">
    <property type="entry name" value="AmmeMemoSam_B"/>
    <property type="match status" value="1"/>
</dbReference>
<dbReference type="PANTHER" id="PTHR11060">
    <property type="entry name" value="PROTEIN MEMO1"/>
    <property type="match status" value="1"/>
</dbReference>
<dbReference type="PANTHER" id="PTHR11060:SF0">
    <property type="entry name" value="PROTEIN MEMO1"/>
    <property type="match status" value="1"/>
</dbReference>
<dbReference type="Pfam" id="PF01875">
    <property type="entry name" value="Memo"/>
    <property type="match status" value="1"/>
</dbReference>
<dbReference type="SUPFAM" id="SSF53213">
    <property type="entry name" value="LigB-like"/>
    <property type="match status" value="1"/>
</dbReference>
<name>Y066_SACS2</name>
<accession>P95994</accession>
<evidence type="ECO:0000255" key="1">
    <source>
        <dbReference type="HAMAP-Rule" id="MF_00055"/>
    </source>
</evidence>
<gene>
    <name type="ordered locus">SSO0066</name>
    <name type="ORF">C05005</name>
    <name type="ORF">C05_044</name>
</gene>
<sequence>MRRLPAVAGSFYESDPKKLKMQIEWSFRHNIGPRDIPKQSYEKKKRDNLFFIVPHAGYIYSGPVAAHSYYYLASEGKPDVVIILGPNHTGLGSYVSAWPKGEWETPLGSVKVDEEVLMQLVMESEVIDLEEKSHLYEHSIEVQLPFLQYFFDDNFKIVPIVIMMQTPEIAEFLADAIYKVIQKYSDKDIVVLASSDMNHYDPHEITMKKDEEAIEKIQQLDYRGLYEVVEGKDVTLCGYGPIMVSLILAKKLGKKAYILKHATSGDTSGPKDSVVGYLAARFGS</sequence>
<proteinExistence type="inferred from homology"/>
<feature type="chain" id="PRO_0000134390" description="MEMO1 family protein SSO0066">
    <location>
        <begin position="1"/>
        <end position="284"/>
    </location>
</feature>
<keyword id="KW-1185">Reference proteome</keyword>
<protein>
    <recommendedName>
        <fullName evidence="1">MEMO1 family protein SSO0066</fullName>
    </recommendedName>
</protein>
<organism>
    <name type="scientific">Saccharolobus solfataricus (strain ATCC 35092 / DSM 1617 / JCM 11322 / P2)</name>
    <name type="common">Sulfolobus solfataricus</name>
    <dbReference type="NCBI Taxonomy" id="273057"/>
    <lineage>
        <taxon>Archaea</taxon>
        <taxon>Thermoproteota</taxon>
        <taxon>Thermoprotei</taxon>
        <taxon>Sulfolobales</taxon>
        <taxon>Sulfolobaceae</taxon>
        <taxon>Saccharolobus</taxon>
    </lineage>
</organism>
<reference key="1">
    <citation type="journal article" date="1996" name="Mol. Microbiol.">
        <title>Organizational characteristics and information content of an archaeal genome: 156 kb of sequence from Sulfolobus solfataricus P2.</title>
        <authorList>
            <person name="Sensen C.W."/>
            <person name="Klenk H.-P."/>
            <person name="Singh R.K."/>
            <person name="Allard G."/>
            <person name="Chan C.C.-Y."/>
            <person name="Liu Q.Y."/>
            <person name="Penny S.L."/>
            <person name="Young F."/>
            <person name="Schenk M.E."/>
            <person name="Gaasterland T."/>
            <person name="Doolittle W.F."/>
            <person name="Ragan M.A."/>
            <person name="Charlebois R.L."/>
        </authorList>
    </citation>
    <scope>NUCLEOTIDE SEQUENCE [GENOMIC DNA]</scope>
    <source>
        <strain>ATCC 35092 / DSM 1617 / JCM 11322 / P2</strain>
    </source>
</reference>
<reference key="2">
    <citation type="journal article" date="2001" name="Proc. Natl. Acad. Sci. U.S.A.">
        <title>The complete genome of the crenarchaeon Sulfolobus solfataricus P2.</title>
        <authorList>
            <person name="She Q."/>
            <person name="Singh R.K."/>
            <person name="Confalonieri F."/>
            <person name="Zivanovic Y."/>
            <person name="Allard G."/>
            <person name="Awayez M.J."/>
            <person name="Chan-Weiher C.C.-Y."/>
            <person name="Clausen I.G."/>
            <person name="Curtis B.A."/>
            <person name="De Moors A."/>
            <person name="Erauso G."/>
            <person name="Fletcher C."/>
            <person name="Gordon P.M.K."/>
            <person name="Heikamp-de Jong I."/>
            <person name="Jeffries A.C."/>
            <person name="Kozera C.J."/>
            <person name="Medina N."/>
            <person name="Peng X."/>
            <person name="Thi-Ngoc H.P."/>
            <person name="Redder P."/>
            <person name="Schenk M.E."/>
            <person name="Theriault C."/>
            <person name="Tolstrup N."/>
            <person name="Charlebois R.L."/>
            <person name="Doolittle W.F."/>
            <person name="Duguet M."/>
            <person name="Gaasterland T."/>
            <person name="Garrett R.A."/>
            <person name="Ragan M.A."/>
            <person name="Sensen C.W."/>
            <person name="Van der Oost J."/>
        </authorList>
    </citation>
    <scope>NUCLEOTIDE SEQUENCE [LARGE SCALE GENOMIC DNA]</scope>
    <source>
        <strain>ATCC 35092 / DSM 1617 / JCM 11322 / P2</strain>
    </source>
</reference>
<comment type="similarity">
    <text evidence="1">Belongs to the MEMO1 family.</text>
</comment>